<evidence type="ECO:0000255" key="1">
    <source>
        <dbReference type="HAMAP-Rule" id="MF_00367"/>
    </source>
</evidence>
<evidence type="ECO:0000255" key="2">
    <source>
        <dbReference type="PROSITE-ProRule" id="PRU01050"/>
    </source>
</evidence>
<accession>Q9ZE30</accession>
<gene>
    <name evidence="1" type="primary">era</name>
    <name type="ordered locus">RP118</name>
</gene>
<keyword id="KW-0997">Cell inner membrane</keyword>
<keyword id="KW-1003">Cell membrane</keyword>
<keyword id="KW-0963">Cytoplasm</keyword>
<keyword id="KW-0342">GTP-binding</keyword>
<keyword id="KW-0472">Membrane</keyword>
<keyword id="KW-0547">Nucleotide-binding</keyword>
<keyword id="KW-1185">Reference proteome</keyword>
<keyword id="KW-0690">Ribosome biogenesis</keyword>
<keyword id="KW-0694">RNA-binding</keyword>
<keyword id="KW-0699">rRNA-binding</keyword>
<proteinExistence type="inferred from homology"/>
<organism>
    <name type="scientific">Rickettsia prowazekii (strain Madrid E)</name>
    <dbReference type="NCBI Taxonomy" id="272947"/>
    <lineage>
        <taxon>Bacteria</taxon>
        <taxon>Pseudomonadati</taxon>
        <taxon>Pseudomonadota</taxon>
        <taxon>Alphaproteobacteria</taxon>
        <taxon>Rickettsiales</taxon>
        <taxon>Rickettsiaceae</taxon>
        <taxon>Rickettsieae</taxon>
        <taxon>Rickettsia</taxon>
        <taxon>typhus group</taxon>
    </lineage>
</organism>
<feature type="chain" id="PRO_0000180043" description="GTPase Era">
    <location>
        <begin position="1"/>
        <end position="295"/>
    </location>
</feature>
<feature type="domain" description="Era-type G" evidence="2">
    <location>
        <begin position="7"/>
        <end position="176"/>
    </location>
</feature>
<feature type="domain" description="KH type-2" evidence="1">
    <location>
        <begin position="204"/>
        <end position="281"/>
    </location>
</feature>
<feature type="region of interest" description="G1" evidence="2">
    <location>
        <begin position="15"/>
        <end position="22"/>
    </location>
</feature>
<feature type="region of interest" description="G2" evidence="2">
    <location>
        <begin position="41"/>
        <end position="45"/>
    </location>
</feature>
<feature type="region of interest" description="G3" evidence="2">
    <location>
        <begin position="62"/>
        <end position="65"/>
    </location>
</feature>
<feature type="region of interest" description="G4" evidence="2">
    <location>
        <begin position="124"/>
        <end position="127"/>
    </location>
</feature>
<feature type="region of interest" description="G5" evidence="2">
    <location>
        <begin position="152"/>
        <end position="154"/>
    </location>
</feature>
<feature type="binding site" evidence="1">
    <location>
        <begin position="15"/>
        <end position="22"/>
    </location>
    <ligand>
        <name>GTP</name>
        <dbReference type="ChEBI" id="CHEBI:37565"/>
    </ligand>
</feature>
<feature type="binding site" evidence="1">
    <location>
        <begin position="62"/>
        <end position="66"/>
    </location>
    <ligand>
        <name>GTP</name>
        <dbReference type="ChEBI" id="CHEBI:37565"/>
    </ligand>
</feature>
<feature type="binding site" evidence="1">
    <location>
        <begin position="124"/>
        <end position="127"/>
    </location>
    <ligand>
        <name>GTP</name>
        <dbReference type="ChEBI" id="CHEBI:37565"/>
    </ligand>
</feature>
<protein>
    <recommendedName>
        <fullName evidence="1">GTPase Era</fullName>
    </recommendedName>
</protein>
<sequence length="295" mass="33730">MTNQIQKTISVCIIGRPNSGKSTLLNRIIGEKLSIVTPKVQTTRSIITGIVTLKDTQIILYDTPGIFEPKGMLEKAMVRCAWSSVYSADLVLSIIDSLKPLDNIAHNILNQFCLLNIVPIFLLNKIDIESKYLNDIKAFLKITHPKSLLFPISALLGKNVDVLLEYIKSKAKVSPWLYADDDITNLPMRFIAAEITREQLFLNLQQELPYKLTVQTEKFEELKDKSIKINQVIVISRENYKAIILGKNGAKIKDIGVKSRVQLEQFFCVPVHLFLFVKVHAFWENNQEFYQYMKI</sequence>
<comment type="function">
    <text evidence="1">An essential GTPase that binds both GDP and GTP, with rapid nucleotide exchange. Plays a role in 16S rRNA processing and 30S ribosomal subunit biogenesis and possibly also in cell cycle regulation and energy metabolism.</text>
</comment>
<comment type="subunit">
    <text evidence="1">Monomer.</text>
</comment>
<comment type="subcellular location">
    <subcellularLocation>
        <location>Cytoplasm</location>
    </subcellularLocation>
    <subcellularLocation>
        <location evidence="1">Cell inner membrane</location>
        <topology evidence="1">Peripheral membrane protein</topology>
    </subcellularLocation>
</comment>
<comment type="similarity">
    <text evidence="1 2">Belongs to the TRAFAC class TrmE-Era-EngA-EngB-Septin-like GTPase superfamily. Era GTPase family.</text>
</comment>
<reference key="1">
    <citation type="journal article" date="1998" name="Nature">
        <title>The genome sequence of Rickettsia prowazekii and the origin of mitochondria.</title>
        <authorList>
            <person name="Andersson S.G.E."/>
            <person name="Zomorodipour A."/>
            <person name="Andersson J.O."/>
            <person name="Sicheritz-Ponten T."/>
            <person name="Alsmark U.C.M."/>
            <person name="Podowski R.M."/>
            <person name="Naeslund A.K."/>
            <person name="Eriksson A.-S."/>
            <person name="Winkler H.H."/>
            <person name="Kurland C.G."/>
        </authorList>
    </citation>
    <scope>NUCLEOTIDE SEQUENCE [LARGE SCALE GENOMIC DNA]</scope>
    <source>
        <strain>Madrid E</strain>
    </source>
</reference>
<dbReference type="EMBL" id="AJ235270">
    <property type="protein sequence ID" value="CAA14587.1"/>
    <property type="molecule type" value="Genomic_DNA"/>
</dbReference>
<dbReference type="PIR" id="D71721">
    <property type="entry name" value="D71721"/>
</dbReference>
<dbReference type="RefSeq" id="NP_220510.1">
    <property type="nucleotide sequence ID" value="NC_000963.1"/>
</dbReference>
<dbReference type="RefSeq" id="WP_004597151.1">
    <property type="nucleotide sequence ID" value="NC_000963.1"/>
</dbReference>
<dbReference type="SMR" id="Q9ZE30"/>
<dbReference type="STRING" id="272947.gene:17555201"/>
<dbReference type="EnsemblBacteria" id="CAA14587">
    <property type="protein sequence ID" value="CAA14587"/>
    <property type="gene ID" value="CAA14587"/>
</dbReference>
<dbReference type="GeneID" id="57569246"/>
<dbReference type="KEGG" id="rpr:RP118"/>
<dbReference type="PATRIC" id="fig|272947.5.peg.120"/>
<dbReference type="eggNOG" id="COG1159">
    <property type="taxonomic scope" value="Bacteria"/>
</dbReference>
<dbReference type="HOGENOM" id="CLU_038009_1_1_5"/>
<dbReference type="OrthoDB" id="9805918at2"/>
<dbReference type="Proteomes" id="UP000002480">
    <property type="component" value="Chromosome"/>
</dbReference>
<dbReference type="GO" id="GO:0005829">
    <property type="term" value="C:cytosol"/>
    <property type="evidence" value="ECO:0007669"/>
    <property type="project" value="TreeGrafter"/>
</dbReference>
<dbReference type="GO" id="GO:0005886">
    <property type="term" value="C:plasma membrane"/>
    <property type="evidence" value="ECO:0007669"/>
    <property type="project" value="UniProtKB-SubCell"/>
</dbReference>
<dbReference type="GO" id="GO:0005525">
    <property type="term" value="F:GTP binding"/>
    <property type="evidence" value="ECO:0007669"/>
    <property type="project" value="UniProtKB-UniRule"/>
</dbReference>
<dbReference type="GO" id="GO:0003924">
    <property type="term" value="F:GTPase activity"/>
    <property type="evidence" value="ECO:0007669"/>
    <property type="project" value="UniProtKB-UniRule"/>
</dbReference>
<dbReference type="GO" id="GO:0043024">
    <property type="term" value="F:ribosomal small subunit binding"/>
    <property type="evidence" value="ECO:0007669"/>
    <property type="project" value="TreeGrafter"/>
</dbReference>
<dbReference type="GO" id="GO:0070181">
    <property type="term" value="F:small ribosomal subunit rRNA binding"/>
    <property type="evidence" value="ECO:0007669"/>
    <property type="project" value="UniProtKB-UniRule"/>
</dbReference>
<dbReference type="GO" id="GO:0000028">
    <property type="term" value="P:ribosomal small subunit assembly"/>
    <property type="evidence" value="ECO:0007669"/>
    <property type="project" value="TreeGrafter"/>
</dbReference>
<dbReference type="CDD" id="cd04163">
    <property type="entry name" value="Era"/>
    <property type="match status" value="1"/>
</dbReference>
<dbReference type="CDD" id="cd22534">
    <property type="entry name" value="KH-II_Era"/>
    <property type="match status" value="1"/>
</dbReference>
<dbReference type="Gene3D" id="3.30.300.20">
    <property type="match status" value="1"/>
</dbReference>
<dbReference type="Gene3D" id="3.40.50.300">
    <property type="entry name" value="P-loop containing nucleotide triphosphate hydrolases"/>
    <property type="match status" value="1"/>
</dbReference>
<dbReference type="HAMAP" id="MF_00367">
    <property type="entry name" value="GTPase_Era"/>
    <property type="match status" value="1"/>
</dbReference>
<dbReference type="InterPro" id="IPR030388">
    <property type="entry name" value="G_ERA_dom"/>
</dbReference>
<dbReference type="InterPro" id="IPR006073">
    <property type="entry name" value="GTP-bd"/>
</dbReference>
<dbReference type="InterPro" id="IPR005662">
    <property type="entry name" value="GTPase_Era-like"/>
</dbReference>
<dbReference type="InterPro" id="IPR015946">
    <property type="entry name" value="KH_dom-like_a/b"/>
</dbReference>
<dbReference type="InterPro" id="IPR004044">
    <property type="entry name" value="KH_dom_type_2"/>
</dbReference>
<dbReference type="InterPro" id="IPR009019">
    <property type="entry name" value="KH_sf_prok-type"/>
</dbReference>
<dbReference type="InterPro" id="IPR027417">
    <property type="entry name" value="P-loop_NTPase"/>
</dbReference>
<dbReference type="InterPro" id="IPR005225">
    <property type="entry name" value="Small_GTP-bd"/>
</dbReference>
<dbReference type="NCBIfam" id="TIGR00436">
    <property type="entry name" value="era"/>
    <property type="match status" value="1"/>
</dbReference>
<dbReference type="NCBIfam" id="NF000908">
    <property type="entry name" value="PRK00089.1"/>
    <property type="match status" value="1"/>
</dbReference>
<dbReference type="NCBIfam" id="TIGR00231">
    <property type="entry name" value="small_GTP"/>
    <property type="match status" value="1"/>
</dbReference>
<dbReference type="PANTHER" id="PTHR42698">
    <property type="entry name" value="GTPASE ERA"/>
    <property type="match status" value="1"/>
</dbReference>
<dbReference type="PANTHER" id="PTHR42698:SF1">
    <property type="entry name" value="GTPASE ERA, MITOCHONDRIAL"/>
    <property type="match status" value="1"/>
</dbReference>
<dbReference type="Pfam" id="PF07650">
    <property type="entry name" value="KH_2"/>
    <property type="match status" value="1"/>
</dbReference>
<dbReference type="Pfam" id="PF01926">
    <property type="entry name" value="MMR_HSR1"/>
    <property type="match status" value="1"/>
</dbReference>
<dbReference type="SUPFAM" id="SSF52540">
    <property type="entry name" value="P-loop containing nucleoside triphosphate hydrolases"/>
    <property type="match status" value="1"/>
</dbReference>
<dbReference type="SUPFAM" id="SSF54814">
    <property type="entry name" value="Prokaryotic type KH domain (KH-domain type II)"/>
    <property type="match status" value="1"/>
</dbReference>
<dbReference type="PROSITE" id="PS51713">
    <property type="entry name" value="G_ERA"/>
    <property type="match status" value="1"/>
</dbReference>
<dbReference type="PROSITE" id="PS50823">
    <property type="entry name" value="KH_TYPE_2"/>
    <property type="match status" value="1"/>
</dbReference>
<name>ERA_RICPR</name>